<evidence type="ECO:0000255" key="1">
    <source>
        <dbReference type="HAMAP-Rule" id="MF_00185"/>
    </source>
</evidence>
<proteinExistence type="inferred from homology"/>
<accession>B0KKZ6</accession>
<dbReference type="EC" id="2.5.1.75" evidence="1"/>
<dbReference type="EMBL" id="CP000926">
    <property type="protein sequence ID" value="ABZ00832.1"/>
    <property type="molecule type" value="Genomic_DNA"/>
</dbReference>
<dbReference type="RefSeq" id="WP_012274458.1">
    <property type="nucleotide sequence ID" value="NC_010322.1"/>
</dbReference>
<dbReference type="SMR" id="B0KKZ6"/>
<dbReference type="KEGG" id="ppg:PputGB1_4947"/>
<dbReference type="eggNOG" id="COG0324">
    <property type="taxonomic scope" value="Bacteria"/>
</dbReference>
<dbReference type="HOGENOM" id="CLU_032616_0_0_6"/>
<dbReference type="Proteomes" id="UP000002157">
    <property type="component" value="Chromosome"/>
</dbReference>
<dbReference type="GO" id="GO:0005524">
    <property type="term" value="F:ATP binding"/>
    <property type="evidence" value="ECO:0007669"/>
    <property type="project" value="UniProtKB-UniRule"/>
</dbReference>
<dbReference type="GO" id="GO:0052381">
    <property type="term" value="F:tRNA dimethylallyltransferase activity"/>
    <property type="evidence" value="ECO:0007669"/>
    <property type="project" value="UniProtKB-UniRule"/>
</dbReference>
<dbReference type="GO" id="GO:0006400">
    <property type="term" value="P:tRNA modification"/>
    <property type="evidence" value="ECO:0007669"/>
    <property type="project" value="TreeGrafter"/>
</dbReference>
<dbReference type="FunFam" id="1.10.20.140:FF:000001">
    <property type="entry name" value="tRNA dimethylallyltransferase"/>
    <property type="match status" value="1"/>
</dbReference>
<dbReference type="Gene3D" id="1.10.20.140">
    <property type="match status" value="1"/>
</dbReference>
<dbReference type="Gene3D" id="3.40.50.300">
    <property type="entry name" value="P-loop containing nucleotide triphosphate hydrolases"/>
    <property type="match status" value="1"/>
</dbReference>
<dbReference type="HAMAP" id="MF_00185">
    <property type="entry name" value="IPP_trans"/>
    <property type="match status" value="1"/>
</dbReference>
<dbReference type="InterPro" id="IPR039657">
    <property type="entry name" value="Dimethylallyltransferase"/>
</dbReference>
<dbReference type="InterPro" id="IPR018022">
    <property type="entry name" value="IPT"/>
</dbReference>
<dbReference type="InterPro" id="IPR027417">
    <property type="entry name" value="P-loop_NTPase"/>
</dbReference>
<dbReference type="NCBIfam" id="TIGR00174">
    <property type="entry name" value="miaA"/>
    <property type="match status" value="1"/>
</dbReference>
<dbReference type="PANTHER" id="PTHR11088">
    <property type="entry name" value="TRNA DIMETHYLALLYLTRANSFERASE"/>
    <property type="match status" value="1"/>
</dbReference>
<dbReference type="PANTHER" id="PTHR11088:SF60">
    <property type="entry name" value="TRNA DIMETHYLALLYLTRANSFERASE"/>
    <property type="match status" value="1"/>
</dbReference>
<dbReference type="Pfam" id="PF01715">
    <property type="entry name" value="IPPT"/>
    <property type="match status" value="1"/>
</dbReference>
<dbReference type="SUPFAM" id="SSF52540">
    <property type="entry name" value="P-loop containing nucleoside triphosphate hydrolases"/>
    <property type="match status" value="1"/>
</dbReference>
<feature type="chain" id="PRO_1000077400" description="tRNA dimethylallyltransferase">
    <location>
        <begin position="1"/>
        <end position="323"/>
    </location>
</feature>
<feature type="region of interest" description="Interaction with substrate tRNA" evidence="1">
    <location>
        <begin position="37"/>
        <end position="40"/>
    </location>
</feature>
<feature type="region of interest" description="Interaction with substrate tRNA" evidence="1">
    <location>
        <begin position="161"/>
        <end position="165"/>
    </location>
</feature>
<feature type="binding site" evidence="1">
    <location>
        <begin position="12"/>
        <end position="19"/>
    </location>
    <ligand>
        <name>ATP</name>
        <dbReference type="ChEBI" id="CHEBI:30616"/>
    </ligand>
</feature>
<feature type="binding site" evidence="1">
    <location>
        <begin position="14"/>
        <end position="19"/>
    </location>
    <ligand>
        <name>substrate</name>
    </ligand>
</feature>
<feature type="site" description="Interaction with substrate tRNA" evidence="1">
    <location>
        <position position="103"/>
    </location>
</feature>
<feature type="site" description="Interaction with substrate tRNA" evidence="1">
    <location>
        <position position="125"/>
    </location>
</feature>
<reference key="1">
    <citation type="submission" date="2008-01" db="EMBL/GenBank/DDBJ databases">
        <title>Complete sequence of Pseudomonas putida GB-1.</title>
        <authorList>
            <consortium name="US DOE Joint Genome Institute"/>
            <person name="Copeland A."/>
            <person name="Lucas S."/>
            <person name="Lapidus A."/>
            <person name="Barry K."/>
            <person name="Glavina del Rio T."/>
            <person name="Dalin E."/>
            <person name="Tice H."/>
            <person name="Pitluck S."/>
            <person name="Bruce D."/>
            <person name="Goodwin L."/>
            <person name="Chertkov O."/>
            <person name="Brettin T."/>
            <person name="Detter J.C."/>
            <person name="Han C."/>
            <person name="Kuske C.R."/>
            <person name="Schmutz J."/>
            <person name="Larimer F."/>
            <person name="Land M."/>
            <person name="Hauser L."/>
            <person name="Kyrpides N."/>
            <person name="Kim E."/>
            <person name="McCarthy J.K."/>
            <person name="Richardson P."/>
        </authorList>
    </citation>
    <scope>NUCLEOTIDE SEQUENCE [LARGE SCALE GENOMIC DNA]</scope>
    <source>
        <strain>GB-1</strain>
    </source>
</reference>
<comment type="function">
    <text evidence="1">Catalyzes the transfer of a dimethylallyl group onto the adenine at position 37 in tRNAs that read codons beginning with uridine, leading to the formation of N6-(dimethylallyl)adenosine (i(6)A).</text>
</comment>
<comment type="catalytic activity">
    <reaction evidence="1">
        <text>adenosine(37) in tRNA + dimethylallyl diphosphate = N(6)-dimethylallyladenosine(37) in tRNA + diphosphate</text>
        <dbReference type="Rhea" id="RHEA:26482"/>
        <dbReference type="Rhea" id="RHEA-COMP:10162"/>
        <dbReference type="Rhea" id="RHEA-COMP:10375"/>
        <dbReference type="ChEBI" id="CHEBI:33019"/>
        <dbReference type="ChEBI" id="CHEBI:57623"/>
        <dbReference type="ChEBI" id="CHEBI:74411"/>
        <dbReference type="ChEBI" id="CHEBI:74415"/>
        <dbReference type="EC" id="2.5.1.75"/>
    </reaction>
</comment>
<comment type="cofactor">
    <cofactor evidence="1">
        <name>Mg(2+)</name>
        <dbReference type="ChEBI" id="CHEBI:18420"/>
    </cofactor>
</comment>
<comment type="subunit">
    <text evidence="1">Monomer.</text>
</comment>
<comment type="similarity">
    <text evidence="1">Belongs to the IPP transferase family.</text>
</comment>
<keyword id="KW-0067">ATP-binding</keyword>
<keyword id="KW-0460">Magnesium</keyword>
<keyword id="KW-0547">Nucleotide-binding</keyword>
<keyword id="KW-0808">Transferase</keyword>
<keyword id="KW-0819">tRNA processing</keyword>
<name>MIAA_PSEPG</name>
<gene>
    <name evidence="1" type="primary">miaA</name>
    <name type="ordered locus">PputGB1_4947</name>
</gene>
<organism>
    <name type="scientific">Pseudomonas putida (strain GB-1)</name>
    <dbReference type="NCBI Taxonomy" id="76869"/>
    <lineage>
        <taxon>Bacteria</taxon>
        <taxon>Pseudomonadati</taxon>
        <taxon>Pseudomonadota</taxon>
        <taxon>Gammaproteobacteria</taxon>
        <taxon>Pseudomonadales</taxon>
        <taxon>Pseudomonadaceae</taxon>
        <taxon>Pseudomonas</taxon>
    </lineage>
</organism>
<protein>
    <recommendedName>
        <fullName evidence="1">tRNA dimethylallyltransferase</fullName>
        <ecNumber evidence="1">2.5.1.75</ecNumber>
    </recommendedName>
    <alternativeName>
        <fullName evidence="1">Dimethylallyl diphosphate:tRNA dimethylallyltransferase</fullName>
        <shortName evidence="1">DMAPP:tRNA dimethylallyltransferase</shortName>
        <shortName evidence="1">DMATase</shortName>
    </alternativeName>
    <alternativeName>
        <fullName evidence="1">Isopentenyl-diphosphate:tRNA isopentenyltransferase</fullName>
        <shortName evidence="1">IPP transferase</shortName>
        <shortName evidence="1">IPPT</shortName>
        <shortName evidence="1">IPTase</shortName>
    </alternativeName>
</protein>
<sequence length="323" mass="35489">MSSKPPAIFLMGPTAAGKTDLAIELTKVLPCELISVDSALVYRGMDIGSAKPSKEILAAHPHRLIDIRDPAESYSAAQFRADALEAMAEITARGKIPLLVGGTMLYYKALIDGLADMPAADAAVRAELEAQAEALGLAELHRQLAEVDPVSAARIHPNDPQRLIRALEVYRVSGESMTAHRQRQFAESRGADAGAGGHLPYTVASLAIAPTDRHILHQRIALRFSQMLEQGFVEEVRSLRARSDLHAGLPSIRAVGYRQVWDYLDGKLTENEMRERGIIATRQLAKRQFTWLRGWPEVHWLDSLACDNLSRTLKYLGAISILS</sequence>